<gene>
    <name evidence="2" type="primary">arcB</name>
    <name type="ordered locus">Smar_0224</name>
</gene>
<evidence type="ECO:0000250" key="1"/>
<evidence type="ECO:0000255" key="2">
    <source>
        <dbReference type="HAMAP-Rule" id="MF_01109"/>
    </source>
</evidence>
<name>OTC_STAMF</name>
<protein>
    <recommendedName>
        <fullName evidence="2">Ornithine carbamoyltransferase</fullName>
        <shortName evidence="2">OTCase</shortName>
        <ecNumber evidence="2">2.1.3.3</ecNumber>
    </recommendedName>
</protein>
<accession>A3DL27</accession>
<keyword id="KW-0056">Arginine metabolism</keyword>
<keyword id="KW-0963">Cytoplasm</keyword>
<keyword id="KW-1185">Reference proteome</keyword>
<keyword id="KW-0808">Transferase</keyword>
<proteinExistence type="inferred from homology"/>
<feature type="chain" id="PRO_1000084863" description="Ornithine carbamoyltransferase">
    <location>
        <begin position="1"/>
        <end position="314"/>
    </location>
</feature>
<feature type="binding site" evidence="2">
    <location>
        <begin position="58"/>
        <end position="61"/>
    </location>
    <ligand>
        <name>carbamoyl phosphate</name>
        <dbReference type="ChEBI" id="CHEBI:58228"/>
    </ligand>
</feature>
<feature type="binding site" evidence="2">
    <location>
        <position position="85"/>
    </location>
    <ligand>
        <name>carbamoyl phosphate</name>
        <dbReference type="ChEBI" id="CHEBI:58228"/>
    </ligand>
</feature>
<feature type="binding site" evidence="2">
    <location>
        <position position="109"/>
    </location>
    <ligand>
        <name>carbamoyl phosphate</name>
        <dbReference type="ChEBI" id="CHEBI:58228"/>
    </ligand>
</feature>
<feature type="binding site" evidence="2">
    <location>
        <begin position="136"/>
        <end position="139"/>
    </location>
    <ligand>
        <name>carbamoyl phosphate</name>
        <dbReference type="ChEBI" id="CHEBI:58228"/>
    </ligand>
</feature>
<feature type="binding site" evidence="2">
    <location>
        <position position="169"/>
    </location>
    <ligand>
        <name>L-ornithine</name>
        <dbReference type="ChEBI" id="CHEBI:46911"/>
    </ligand>
</feature>
<feature type="binding site" evidence="2">
    <location>
        <position position="233"/>
    </location>
    <ligand>
        <name>L-ornithine</name>
        <dbReference type="ChEBI" id="CHEBI:46911"/>
    </ligand>
</feature>
<feature type="binding site" evidence="2">
    <location>
        <begin position="237"/>
        <end position="238"/>
    </location>
    <ligand>
        <name>L-ornithine</name>
        <dbReference type="ChEBI" id="CHEBI:46911"/>
    </ligand>
</feature>
<feature type="binding site" evidence="2">
    <location>
        <begin position="273"/>
        <end position="274"/>
    </location>
    <ligand>
        <name>carbamoyl phosphate</name>
        <dbReference type="ChEBI" id="CHEBI:58228"/>
    </ligand>
</feature>
<feature type="binding site" evidence="2">
    <location>
        <position position="301"/>
    </location>
    <ligand>
        <name>carbamoyl phosphate</name>
        <dbReference type="ChEBI" id="CHEBI:58228"/>
    </ligand>
</feature>
<comment type="function">
    <text evidence="1">Reversibly catalyzes the transfer of the carbamoyl group from carbamoyl phosphate (CP) to the N(epsilon) atom of ornithine (ORN) to produce L-citrulline.</text>
</comment>
<comment type="catalytic activity">
    <reaction evidence="2">
        <text>carbamoyl phosphate + L-ornithine = L-citrulline + phosphate + H(+)</text>
        <dbReference type="Rhea" id="RHEA:19513"/>
        <dbReference type="ChEBI" id="CHEBI:15378"/>
        <dbReference type="ChEBI" id="CHEBI:43474"/>
        <dbReference type="ChEBI" id="CHEBI:46911"/>
        <dbReference type="ChEBI" id="CHEBI:57743"/>
        <dbReference type="ChEBI" id="CHEBI:58228"/>
        <dbReference type="EC" id="2.1.3.3"/>
    </reaction>
</comment>
<comment type="pathway">
    <text evidence="2">Amino-acid degradation; L-arginine degradation via ADI pathway; carbamoyl phosphate from L-arginine: step 2/2.</text>
</comment>
<comment type="subcellular location">
    <subcellularLocation>
        <location evidence="2">Cytoplasm</location>
    </subcellularLocation>
</comment>
<comment type="similarity">
    <text evidence="2">Belongs to the aspartate/ornithine carbamoyltransferase superfamily. OTCase family.</text>
</comment>
<sequence>MVTSLKGRDFLTLADYSREELLFVLETAKHLKQRYLAGERVIPLLPGRHLAMIFEKSSTRTRISFETAMRELGGDALYLGWKELQLGRGETIEDTARVVSRYVDGIMARVYEHEKLEKLAQYSRVPVINGLSDLLHPAQALTDIYTIMEKKGSDLSKLKIVFIGDGGDNVLHSLMLGIGILGGKIIISSPKGYDPDPRIIKLFEEKAVPNGGEYEIIRDPYEAVRDADVVYTDVWVSMGQEAEKEKRIKDLEPYRVTVELMKHAKSDAVFMHCLPAHRGQEVVDEVIDGKWSIVWDQAENRKHVQKAILALIIP</sequence>
<reference key="1">
    <citation type="journal article" date="2009" name="BMC Genomics">
        <title>The complete genome sequence of Staphylothermus marinus reveals differences in sulfur metabolism among heterotrophic Crenarchaeota.</title>
        <authorList>
            <person name="Anderson I.J."/>
            <person name="Dharmarajan L."/>
            <person name="Rodriguez J."/>
            <person name="Hooper S."/>
            <person name="Porat I."/>
            <person name="Ulrich L.E."/>
            <person name="Elkins J.G."/>
            <person name="Mavromatis K."/>
            <person name="Sun H."/>
            <person name="Land M."/>
            <person name="Lapidus A."/>
            <person name="Lucas S."/>
            <person name="Barry K."/>
            <person name="Huber H."/>
            <person name="Zhulin I.B."/>
            <person name="Whitman W.B."/>
            <person name="Mukhopadhyay B."/>
            <person name="Woese C."/>
            <person name="Bristow J."/>
            <person name="Kyrpides N."/>
        </authorList>
    </citation>
    <scope>NUCLEOTIDE SEQUENCE [LARGE SCALE GENOMIC DNA]</scope>
    <source>
        <strain>ATCC 43588 / DSM 3639 / JCM 9404 / F1</strain>
    </source>
</reference>
<reference key="2">
    <citation type="journal article" date="2009" name="Stand. Genomic Sci.">
        <title>Complete genome sequence of Staphylothermus marinus Stetter and Fiala 1986 type strain F1.</title>
        <authorList>
            <person name="Anderson I.J."/>
            <person name="Sun H."/>
            <person name="Lapidus A."/>
            <person name="Copeland A."/>
            <person name="Glavina Del Rio T."/>
            <person name="Tice H."/>
            <person name="Dalin E."/>
            <person name="Lucas S."/>
            <person name="Barry K."/>
            <person name="Land M."/>
            <person name="Richardson P."/>
            <person name="Huber H."/>
            <person name="Kyrpides N.C."/>
        </authorList>
    </citation>
    <scope>NUCLEOTIDE SEQUENCE [LARGE SCALE GENOMIC DNA]</scope>
    <source>
        <strain>ATCC 43588 / DSM 3639 / JCM 9404 / F1</strain>
    </source>
</reference>
<dbReference type="EC" id="2.1.3.3" evidence="2"/>
<dbReference type="EMBL" id="CP000575">
    <property type="protein sequence ID" value="ABN69337.1"/>
    <property type="molecule type" value="Genomic_DNA"/>
</dbReference>
<dbReference type="RefSeq" id="WP_011838528.1">
    <property type="nucleotide sequence ID" value="NC_009033.1"/>
</dbReference>
<dbReference type="SMR" id="A3DL27"/>
<dbReference type="STRING" id="399550.Smar_0224"/>
<dbReference type="GeneID" id="4906784"/>
<dbReference type="KEGG" id="smr:Smar_0224"/>
<dbReference type="eggNOG" id="arCOG00912">
    <property type="taxonomic scope" value="Archaea"/>
</dbReference>
<dbReference type="HOGENOM" id="CLU_043846_3_2_2"/>
<dbReference type="OrthoDB" id="4696at2157"/>
<dbReference type="UniPathway" id="UPA00254">
    <property type="reaction ID" value="UER00365"/>
</dbReference>
<dbReference type="Proteomes" id="UP000000254">
    <property type="component" value="Chromosome"/>
</dbReference>
<dbReference type="GO" id="GO:0005737">
    <property type="term" value="C:cytoplasm"/>
    <property type="evidence" value="ECO:0007669"/>
    <property type="project" value="UniProtKB-SubCell"/>
</dbReference>
<dbReference type="GO" id="GO:0016597">
    <property type="term" value="F:amino acid binding"/>
    <property type="evidence" value="ECO:0007669"/>
    <property type="project" value="InterPro"/>
</dbReference>
<dbReference type="GO" id="GO:0004585">
    <property type="term" value="F:ornithine carbamoyltransferase activity"/>
    <property type="evidence" value="ECO:0007669"/>
    <property type="project" value="UniProtKB-UniRule"/>
</dbReference>
<dbReference type="GO" id="GO:0042450">
    <property type="term" value="P:arginine biosynthetic process via ornithine"/>
    <property type="evidence" value="ECO:0007669"/>
    <property type="project" value="TreeGrafter"/>
</dbReference>
<dbReference type="GO" id="GO:0019547">
    <property type="term" value="P:arginine catabolic process to ornithine"/>
    <property type="evidence" value="ECO:0007669"/>
    <property type="project" value="UniProtKB-UniRule"/>
</dbReference>
<dbReference type="GO" id="GO:0019240">
    <property type="term" value="P:citrulline biosynthetic process"/>
    <property type="evidence" value="ECO:0007669"/>
    <property type="project" value="TreeGrafter"/>
</dbReference>
<dbReference type="FunFam" id="3.40.50.1370:FF:000008">
    <property type="entry name" value="Ornithine carbamoyltransferase"/>
    <property type="match status" value="1"/>
</dbReference>
<dbReference type="Gene3D" id="3.40.50.1370">
    <property type="entry name" value="Aspartate/ornithine carbamoyltransferase"/>
    <property type="match status" value="2"/>
</dbReference>
<dbReference type="HAMAP" id="MF_01109">
    <property type="entry name" value="OTCase"/>
    <property type="match status" value="1"/>
</dbReference>
<dbReference type="InterPro" id="IPR006132">
    <property type="entry name" value="Asp/Orn_carbamoyltranf_P-bd"/>
</dbReference>
<dbReference type="InterPro" id="IPR006130">
    <property type="entry name" value="Asp/Orn_carbamoylTrfase"/>
</dbReference>
<dbReference type="InterPro" id="IPR036901">
    <property type="entry name" value="Asp/Orn_carbamoylTrfase_sf"/>
</dbReference>
<dbReference type="InterPro" id="IPR006131">
    <property type="entry name" value="Asp_carbamoyltransf_Asp/Orn-bd"/>
</dbReference>
<dbReference type="InterPro" id="IPR002292">
    <property type="entry name" value="Orn/put_carbamltrans"/>
</dbReference>
<dbReference type="InterPro" id="IPR024904">
    <property type="entry name" value="OTCase_ArgI"/>
</dbReference>
<dbReference type="NCBIfam" id="TIGR00658">
    <property type="entry name" value="orni_carb_tr"/>
    <property type="match status" value="1"/>
</dbReference>
<dbReference type="NCBIfam" id="NF001986">
    <property type="entry name" value="PRK00779.1"/>
    <property type="match status" value="1"/>
</dbReference>
<dbReference type="PANTHER" id="PTHR45753">
    <property type="entry name" value="ORNITHINE CARBAMOYLTRANSFERASE, MITOCHONDRIAL"/>
    <property type="match status" value="1"/>
</dbReference>
<dbReference type="PANTHER" id="PTHR45753:SF3">
    <property type="entry name" value="ORNITHINE TRANSCARBAMYLASE, MITOCHONDRIAL"/>
    <property type="match status" value="1"/>
</dbReference>
<dbReference type="Pfam" id="PF00185">
    <property type="entry name" value="OTCace"/>
    <property type="match status" value="1"/>
</dbReference>
<dbReference type="Pfam" id="PF02729">
    <property type="entry name" value="OTCace_N"/>
    <property type="match status" value="1"/>
</dbReference>
<dbReference type="PRINTS" id="PR00100">
    <property type="entry name" value="AOTCASE"/>
</dbReference>
<dbReference type="PRINTS" id="PR00102">
    <property type="entry name" value="OTCASE"/>
</dbReference>
<dbReference type="SUPFAM" id="SSF53671">
    <property type="entry name" value="Aspartate/ornithine carbamoyltransferase"/>
    <property type="match status" value="1"/>
</dbReference>
<dbReference type="PROSITE" id="PS00097">
    <property type="entry name" value="CARBAMOYLTRANSFERASE"/>
    <property type="match status" value="1"/>
</dbReference>
<organism>
    <name type="scientific">Staphylothermus marinus (strain ATCC 43588 / DSM 3639 / JCM 9404 / F1)</name>
    <dbReference type="NCBI Taxonomy" id="399550"/>
    <lineage>
        <taxon>Archaea</taxon>
        <taxon>Thermoproteota</taxon>
        <taxon>Thermoprotei</taxon>
        <taxon>Desulfurococcales</taxon>
        <taxon>Desulfurococcaceae</taxon>
        <taxon>Staphylothermus</taxon>
    </lineage>
</organism>